<accession>Q39Y15</accession>
<sequence length="174" mass="18749">MNRENKQQQVAELHEKLKRAKAVFLADFRGMSVEQATTLRNELRAAAVEYKVAKNTLLELASKETDKESLSPHYAGPTAIAFSYDDPVAAAKVLSKFAKTQANTFKLKAAVLSGKQISVSDIQALADLPSREVLLAKLLGTINAPVANFVGVLAAVPGSFVRALNAIKIQKEGN</sequence>
<proteinExistence type="inferred from homology"/>
<feature type="chain" id="PRO_0000234850" description="Large ribosomal subunit protein uL10">
    <location>
        <begin position="1"/>
        <end position="174"/>
    </location>
</feature>
<gene>
    <name evidence="1" type="primary">rplJ</name>
    <name type="ordered locus">Gmet_0617</name>
</gene>
<organism>
    <name type="scientific">Geobacter metallireducens (strain ATCC 53774 / DSM 7210 / GS-15)</name>
    <dbReference type="NCBI Taxonomy" id="269799"/>
    <lineage>
        <taxon>Bacteria</taxon>
        <taxon>Pseudomonadati</taxon>
        <taxon>Thermodesulfobacteriota</taxon>
        <taxon>Desulfuromonadia</taxon>
        <taxon>Geobacterales</taxon>
        <taxon>Geobacteraceae</taxon>
        <taxon>Geobacter</taxon>
    </lineage>
</organism>
<name>RL10_GEOMG</name>
<reference key="1">
    <citation type="journal article" date="2009" name="BMC Microbiol.">
        <title>The genome sequence of Geobacter metallireducens: features of metabolism, physiology and regulation common and dissimilar to Geobacter sulfurreducens.</title>
        <authorList>
            <person name="Aklujkar M."/>
            <person name="Krushkal J."/>
            <person name="DiBartolo G."/>
            <person name="Lapidus A."/>
            <person name="Land M.L."/>
            <person name="Lovley D.R."/>
        </authorList>
    </citation>
    <scope>NUCLEOTIDE SEQUENCE [LARGE SCALE GENOMIC DNA]</scope>
    <source>
        <strain>ATCC 53774 / DSM 7210 / GS-15</strain>
    </source>
</reference>
<comment type="function">
    <text evidence="1">Forms part of the ribosomal stalk, playing a central role in the interaction of the ribosome with GTP-bound translation factors.</text>
</comment>
<comment type="subunit">
    <text evidence="1">Part of the ribosomal stalk of the 50S ribosomal subunit. The N-terminus interacts with L11 and the large rRNA to form the base of the stalk. The C-terminus forms an elongated spine to which L12 dimers bind in a sequential fashion forming a multimeric L10(L12)X complex.</text>
</comment>
<comment type="similarity">
    <text evidence="1">Belongs to the universal ribosomal protein uL10 family.</text>
</comment>
<protein>
    <recommendedName>
        <fullName evidence="1">Large ribosomal subunit protein uL10</fullName>
    </recommendedName>
    <alternativeName>
        <fullName evidence="2">50S ribosomal protein L10</fullName>
    </alternativeName>
</protein>
<dbReference type="EMBL" id="CP000148">
    <property type="protein sequence ID" value="ABB30859.1"/>
    <property type="molecule type" value="Genomic_DNA"/>
</dbReference>
<dbReference type="RefSeq" id="WP_004514633.1">
    <property type="nucleotide sequence ID" value="NC_007517.1"/>
</dbReference>
<dbReference type="SMR" id="Q39Y15"/>
<dbReference type="STRING" id="269799.Gmet_0617"/>
<dbReference type="KEGG" id="gme:Gmet_0617"/>
<dbReference type="eggNOG" id="COG0244">
    <property type="taxonomic scope" value="Bacteria"/>
</dbReference>
<dbReference type="HOGENOM" id="CLU_092227_0_0_7"/>
<dbReference type="Proteomes" id="UP000007073">
    <property type="component" value="Chromosome"/>
</dbReference>
<dbReference type="GO" id="GO:0015934">
    <property type="term" value="C:large ribosomal subunit"/>
    <property type="evidence" value="ECO:0007669"/>
    <property type="project" value="InterPro"/>
</dbReference>
<dbReference type="GO" id="GO:0070180">
    <property type="term" value="F:large ribosomal subunit rRNA binding"/>
    <property type="evidence" value="ECO:0007669"/>
    <property type="project" value="UniProtKB-UniRule"/>
</dbReference>
<dbReference type="GO" id="GO:0003735">
    <property type="term" value="F:structural constituent of ribosome"/>
    <property type="evidence" value="ECO:0007669"/>
    <property type="project" value="InterPro"/>
</dbReference>
<dbReference type="GO" id="GO:0006412">
    <property type="term" value="P:translation"/>
    <property type="evidence" value="ECO:0007669"/>
    <property type="project" value="UniProtKB-UniRule"/>
</dbReference>
<dbReference type="CDD" id="cd05797">
    <property type="entry name" value="Ribosomal_L10"/>
    <property type="match status" value="1"/>
</dbReference>
<dbReference type="Gene3D" id="3.30.70.1730">
    <property type="match status" value="1"/>
</dbReference>
<dbReference type="Gene3D" id="6.10.250.290">
    <property type="match status" value="1"/>
</dbReference>
<dbReference type="HAMAP" id="MF_00362">
    <property type="entry name" value="Ribosomal_uL10"/>
    <property type="match status" value="1"/>
</dbReference>
<dbReference type="InterPro" id="IPR001790">
    <property type="entry name" value="Ribosomal_uL10"/>
</dbReference>
<dbReference type="InterPro" id="IPR043141">
    <property type="entry name" value="Ribosomal_uL10-like_sf"/>
</dbReference>
<dbReference type="InterPro" id="IPR022973">
    <property type="entry name" value="Ribosomal_uL10_bac"/>
</dbReference>
<dbReference type="InterPro" id="IPR047865">
    <property type="entry name" value="Ribosomal_uL10_bac_type"/>
</dbReference>
<dbReference type="InterPro" id="IPR002363">
    <property type="entry name" value="Ribosomal_uL10_CS_bac"/>
</dbReference>
<dbReference type="NCBIfam" id="NF000955">
    <property type="entry name" value="PRK00099.1-1"/>
    <property type="match status" value="1"/>
</dbReference>
<dbReference type="PANTHER" id="PTHR11560">
    <property type="entry name" value="39S RIBOSOMAL PROTEIN L10, MITOCHONDRIAL"/>
    <property type="match status" value="1"/>
</dbReference>
<dbReference type="Pfam" id="PF00466">
    <property type="entry name" value="Ribosomal_L10"/>
    <property type="match status" value="1"/>
</dbReference>
<dbReference type="SUPFAM" id="SSF160369">
    <property type="entry name" value="Ribosomal protein L10-like"/>
    <property type="match status" value="1"/>
</dbReference>
<dbReference type="PROSITE" id="PS01109">
    <property type="entry name" value="RIBOSOMAL_L10"/>
    <property type="match status" value="1"/>
</dbReference>
<keyword id="KW-1185">Reference proteome</keyword>
<keyword id="KW-0687">Ribonucleoprotein</keyword>
<keyword id="KW-0689">Ribosomal protein</keyword>
<keyword id="KW-0694">RNA-binding</keyword>
<keyword id="KW-0699">rRNA-binding</keyword>
<evidence type="ECO:0000255" key="1">
    <source>
        <dbReference type="HAMAP-Rule" id="MF_00362"/>
    </source>
</evidence>
<evidence type="ECO:0000305" key="2"/>